<dbReference type="EC" id="2.7.7.-" evidence="1"/>
<dbReference type="EC" id="2.7.7.108" evidence="1"/>
<dbReference type="EMBL" id="CP000494">
    <property type="protein sequence ID" value="ABQ35939.1"/>
    <property type="molecule type" value="Genomic_DNA"/>
</dbReference>
<dbReference type="RefSeq" id="WP_012043943.1">
    <property type="nucleotide sequence ID" value="NC_009485.1"/>
</dbReference>
<dbReference type="SMR" id="A5EIE5"/>
<dbReference type="STRING" id="288000.BBta_3863"/>
<dbReference type="KEGG" id="bbt:BBta_3863"/>
<dbReference type="eggNOG" id="COG0397">
    <property type="taxonomic scope" value="Bacteria"/>
</dbReference>
<dbReference type="HOGENOM" id="CLU_010245_4_1_5"/>
<dbReference type="OrthoDB" id="9776281at2"/>
<dbReference type="Proteomes" id="UP000000246">
    <property type="component" value="Chromosome"/>
</dbReference>
<dbReference type="GO" id="GO:0070733">
    <property type="term" value="F:AMPylase activity"/>
    <property type="evidence" value="ECO:0007669"/>
    <property type="project" value="RHEA"/>
</dbReference>
<dbReference type="GO" id="GO:0005524">
    <property type="term" value="F:ATP binding"/>
    <property type="evidence" value="ECO:0007669"/>
    <property type="project" value="UniProtKB-UniRule"/>
</dbReference>
<dbReference type="GO" id="GO:0000287">
    <property type="term" value="F:magnesium ion binding"/>
    <property type="evidence" value="ECO:0007669"/>
    <property type="project" value="UniProtKB-UniRule"/>
</dbReference>
<dbReference type="HAMAP" id="MF_00692">
    <property type="entry name" value="YdiU_SelO"/>
    <property type="match status" value="1"/>
</dbReference>
<dbReference type="InterPro" id="IPR003846">
    <property type="entry name" value="SelO"/>
</dbReference>
<dbReference type="NCBIfam" id="NF000658">
    <property type="entry name" value="PRK00029.1"/>
    <property type="match status" value="1"/>
</dbReference>
<dbReference type="PANTHER" id="PTHR32057">
    <property type="entry name" value="PROTEIN ADENYLYLTRANSFERASE SELO, MITOCHONDRIAL"/>
    <property type="match status" value="1"/>
</dbReference>
<dbReference type="PANTHER" id="PTHR32057:SF14">
    <property type="entry name" value="PROTEIN ADENYLYLTRANSFERASE SELO, MITOCHONDRIAL"/>
    <property type="match status" value="1"/>
</dbReference>
<dbReference type="Pfam" id="PF02696">
    <property type="entry name" value="SelO"/>
    <property type="match status" value="1"/>
</dbReference>
<keyword id="KW-0067">ATP-binding</keyword>
<keyword id="KW-0460">Magnesium</keyword>
<keyword id="KW-0464">Manganese</keyword>
<keyword id="KW-0479">Metal-binding</keyword>
<keyword id="KW-0547">Nucleotide-binding</keyword>
<keyword id="KW-0548">Nucleotidyltransferase</keyword>
<keyword id="KW-1185">Reference proteome</keyword>
<keyword id="KW-0808">Transferase</keyword>
<proteinExistence type="inferred from homology"/>
<sequence>MTVHFPFQNSYAALPDNFFARVAPTPVAAPRLIKLNRPLAAELGLNPAELETAEGAEILAGKTVPEGAEPIAMAYAGHQFGHFVPQLGDGRAVLLGEVVDKNGVRRDIQLKGSGPTPFSRRGDGRAALGPVLREYIVSEAMAALGIPTTRSLAAVVTGEQVYRGIALPGAVLTRVATSHIRVGTFQYFAARQDVEAVRRLADHVISRHYPDLAGTERPYHALLDAVIARQAKLIADWLLVGFIHGVMNTDNTSVSGETIDYGPCAFMDGYDPKQVFSSIDEFGRYAFANQPRIALWNLTRLAECLLPLFGDDKDQAIKEAEAALDGFAAQFTDAHQAGLRRKLGLFTQVEGDQPLAQALFDAMAAVKADFTLTFRRLSDAAGSGDDAPVRALFEDPTGLDEWLPRWRQRLADEPQTAAERAAAMRQVNPAFIPRNHRIEAVITAAVENDDYAPFEELHAVLARPYDDQPAFSAYAEPPQPDERVLQTFCGT</sequence>
<evidence type="ECO:0000255" key="1">
    <source>
        <dbReference type="HAMAP-Rule" id="MF_00692"/>
    </source>
</evidence>
<comment type="function">
    <text evidence="1">Nucleotidyltransferase involved in the post-translational modification of proteins. It can catalyze the addition of adenosine monophosphate (AMP) or uridine monophosphate (UMP) to a protein, resulting in modifications known as AMPylation and UMPylation.</text>
</comment>
<comment type="catalytic activity">
    <reaction evidence="1">
        <text>L-seryl-[protein] + ATP = 3-O-(5'-adenylyl)-L-seryl-[protein] + diphosphate</text>
        <dbReference type="Rhea" id="RHEA:58120"/>
        <dbReference type="Rhea" id="RHEA-COMP:9863"/>
        <dbReference type="Rhea" id="RHEA-COMP:15073"/>
        <dbReference type="ChEBI" id="CHEBI:29999"/>
        <dbReference type="ChEBI" id="CHEBI:30616"/>
        <dbReference type="ChEBI" id="CHEBI:33019"/>
        <dbReference type="ChEBI" id="CHEBI:142516"/>
        <dbReference type="EC" id="2.7.7.108"/>
    </reaction>
</comment>
<comment type="catalytic activity">
    <reaction evidence="1">
        <text>L-threonyl-[protein] + ATP = 3-O-(5'-adenylyl)-L-threonyl-[protein] + diphosphate</text>
        <dbReference type="Rhea" id="RHEA:54292"/>
        <dbReference type="Rhea" id="RHEA-COMP:11060"/>
        <dbReference type="Rhea" id="RHEA-COMP:13847"/>
        <dbReference type="ChEBI" id="CHEBI:30013"/>
        <dbReference type="ChEBI" id="CHEBI:30616"/>
        <dbReference type="ChEBI" id="CHEBI:33019"/>
        <dbReference type="ChEBI" id="CHEBI:138113"/>
        <dbReference type="EC" id="2.7.7.108"/>
    </reaction>
</comment>
<comment type="catalytic activity">
    <reaction evidence="1">
        <text>L-tyrosyl-[protein] + ATP = O-(5'-adenylyl)-L-tyrosyl-[protein] + diphosphate</text>
        <dbReference type="Rhea" id="RHEA:54288"/>
        <dbReference type="Rhea" id="RHEA-COMP:10136"/>
        <dbReference type="Rhea" id="RHEA-COMP:13846"/>
        <dbReference type="ChEBI" id="CHEBI:30616"/>
        <dbReference type="ChEBI" id="CHEBI:33019"/>
        <dbReference type="ChEBI" id="CHEBI:46858"/>
        <dbReference type="ChEBI" id="CHEBI:83624"/>
        <dbReference type="EC" id="2.7.7.108"/>
    </reaction>
</comment>
<comment type="catalytic activity">
    <reaction evidence="1">
        <text>L-histidyl-[protein] + UTP = N(tele)-(5'-uridylyl)-L-histidyl-[protein] + diphosphate</text>
        <dbReference type="Rhea" id="RHEA:83891"/>
        <dbReference type="Rhea" id="RHEA-COMP:9745"/>
        <dbReference type="Rhea" id="RHEA-COMP:20239"/>
        <dbReference type="ChEBI" id="CHEBI:29979"/>
        <dbReference type="ChEBI" id="CHEBI:33019"/>
        <dbReference type="ChEBI" id="CHEBI:46398"/>
        <dbReference type="ChEBI" id="CHEBI:233474"/>
    </reaction>
</comment>
<comment type="catalytic activity">
    <reaction evidence="1">
        <text>L-seryl-[protein] + UTP = O-(5'-uridylyl)-L-seryl-[protein] + diphosphate</text>
        <dbReference type="Rhea" id="RHEA:64604"/>
        <dbReference type="Rhea" id="RHEA-COMP:9863"/>
        <dbReference type="Rhea" id="RHEA-COMP:16635"/>
        <dbReference type="ChEBI" id="CHEBI:29999"/>
        <dbReference type="ChEBI" id="CHEBI:33019"/>
        <dbReference type="ChEBI" id="CHEBI:46398"/>
        <dbReference type="ChEBI" id="CHEBI:156051"/>
    </reaction>
</comment>
<comment type="catalytic activity">
    <reaction evidence="1">
        <text>L-tyrosyl-[protein] + UTP = O-(5'-uridylyl)-L-tyrosyl-[protein] + diphosphate</text>
        <dbReference type="Rhea" id="RHEA:83887"/>
        <dbReference type="Rhea" id="RHEA-COMP:10136"/>
        <dbReference type="Rhea" id="RHEA-COMP:20238"/>
        <dbReference type="ChEBI" id="CHEBI:33019"/>
        <dbReference type="ChEBI" id="CHEBI:46398"/>
        <dbReference type="ChEBI" id="CHEBI:46858"/>
        <dbReference type="ChEBI" id="CHEBI:90602"/>
    </reaction>
</comment>
<comment type="cofactor">
    <cofactor evidence="1">
        <name>Mg(2+)</name>
        <dbReference type="ChEBI" id="CHEBI:18420"/>
    </cofactor>
    <cofactor evidence="1">
        <name>Mn(2+)</name>
        <dbReference type="ChEBI" id="CHEBI:29035"/>
    </cofactor>
</comment>
<comment type="similarity">
    <text evidence="1">Belongs to the SELO family.</text>
</comment>
<gene>
    <name evidence="1" type="primary">ydiU</name>
    <name evidence="1" type="synonym">selO</name>
    <name type="ordered locus">BBta_3863</name>
</gene>
<name>SELO_BRASB</name>
<reference key="1">
    <citation type="journal article" date="2007" name="Science">
        <title>Legumes symbioses: absence of nod genes in photosynthetic bradyrhizobia.</title>
        <authorList>
            <person name="Giraud E."/>
            <person name="Moulin L."/>
            <person name="Vallenet D."/>
            <person name="Barbe V."/>
            <person name="Cytryn E."/>
            <person name="Avarre J.-C."/>
            <person name="Jaubert M."/>
            <person name="Simon D."/>
            <person name="Cartieaux F."/>
            <person name="Prin Y."/>
            <person name="Bena G."/>
            <person name="Hannibal L."/>
            <person name="Fardoux J."/>
            <person name="Kojadinovic M."/>
            <person name="Vuillet L."/>
            <person name="Lajus A."/>
            <person name="Cruveiller S."/>
            <person name="Rouy Z."/>
            <person name="Mangenot S."/>
            <person name="Segurens B."/>
            <person name="Dossat C."/>
            <person name="Franck W.L."/>
            <person name="Chang W.-S."/>
            <person name="Saunders E."/>
            <person name="Bruce D."/>
            <person name="Richardson P."/>
            <person name="Normand P."/>
            <person name="Dreyfus B."/>
            <person name="Pignol D."/>
            <person name="Stacey G."/>
            <person name="Emerich D."/>
            <person name="Vermeglio A."/>
            <person name="Medigue C."/>
            <person name="Sadowsky M."/>
        </authorList>
    </citation>
    <scope>NUCLEOTIDE SEQUENCE [LARGE SCALE GENOMIC DNA]</scope>
    <source>
        <strain>BTAi1 / ATCC BAA-1182</strain>
    </source>
</reference>
<protein>
    <recommendedName>
        <fullName evidence="1">Protein nucleotidyltransferase YdiU</fullName>
        <ecNumber evidence="1">2.7.7.-</ecNumber>
    </recommendedName>
    <alternativeName>
        <fullName evidence="1">Protein adenylyltransferase YdiU</fullName>
        <ecNumber evidence="1">2.7.7.108</ecNumber>
    </alternativeName>
    <alternativeName>
        <fullName evidence="1">Protein uridylyltransferase YdiU</fullName>
        <ecNumber evidence="1">2.7.7.-</ecNumber>
    </alternativeName>
</protein>
<accession>A5EIE5</accession>
<feature type="chain" id="PRO_1000045239" description="Protein nucleotidyltransferase YdiU">
    <location>
        <begin position="1"/>
        <end position="491"/>
    </location>
</feature>
<feature type="active site" description="Proton acceptor" evidence="1">
    <location>
        <position position="250"/>
    </location>
</feature>
<feature type="binding site" evidence="1">
    <location>
        <position position="88"/>
    </location>
    <ligand>
        <name>ATP</name>
        <dbReference type="ChEBI" id="CHEBI:30616"/>
    </ligand>
</feature>
<feature type="binding site" evidence="1">
    <location>
        <position position="90"/>
    </location>
    <ligand>
        <name>ATP</name>
        <dbReference type="ChEBI" id="CHEBI:30616"/>
    </ligand>
</feature>
<feature type="binding site" evidence="1">
    <location>
        <position position="91"/>
    </location>
    <ligand>
        <name>ATP</name>
        <dbReference type="ChEBI" id="CHEBI:30616"/>
    </ligand>
</feature>
<feature type="binding site" evidence="1">
    <location>
        <position position="111"/>
    </location>
    <ligand>
        <name>ATP</name>
        <dbReference type="ChEBI" id="CHEBI:30616"/>
    </ligand>
</feature>
<feature type="binding site" evidence="1">
    <location>
        <position position="123"/>
    </location>
    <ligand>
        <name>ATP</name>
        <dbReference type="ChEBI" id="CHEBI:30616"/>
    </ligand>
</feature>
<feature type="binding site" evidence="1">
    <location>
        <position position="124"/>
    </location>
    <ligand>
        <name>ATP</name>
        <dbReference type="ChEBI" id="CHEBI:30616"/>
    </ligand>
</feature>
<feature type="binding site" evidence="1">
    <location>
        <position position="174"/>
    </location>
    <ligand>
        <name>ATP</name>
        <dbReference type="ChEBI" id="CHEBI:30616"/>
    </ligand>
</feature>
<feature type="binding site" evidence="1">
    <location>
        <position position="181"/>
    </location>
    <ligand>
        <name>ATP</name>
        <dbReference type="ChEBI" id="CHEBI:30616"/>
    </ligand>
</feature>
<feature type="binding site" evidence="1">
    <location>
        <position position="251"/>
    </location>
    <ligand>
        <name>Mg(2+)</name>
        <dbReference type="ChEBI" id="CHEBI:18420"/>
    </ligand>
</feature>
<feature type="binding site" evidence="1">
    <location>
        <position position="260"/>
    </location>
    <ligand>
        <name>ATP</name>
        <dbReference type="ChEBI" id="CHEBI:30616"/>
    </ligand>
</feature>
<feature type="binding site" evidence="1">
    <location>
        <position position="260"/>
    </location>
    <ligand>
        <name>Mg(2+)</name>
        <dbReference type="ChEBI" id="CHEBI:18420"/>
    </ligand>
</feature>
<organism>
    <name type="scientific">Bradyrhizobium sp. (strain BTAi1 / ATCC BAA-1182)</name>
    <dbReference type="NCBI Taxonomy" id="288000"/>
    <lineage>
        <taxon>Bacteria</taxon>
        <taxon>Pseudomonadati</taxon>
        <taxon>Pseudomonadota</taxon>
        <taxon>Alphaproteobacteria</taxon>
        <taxon>Hyphomicrobiales</taxon>
        <taxon>Nitrobacteraceae</taxon>
        <taxon>Bradyrhizobium</taxon>
    </lineage>
</organism>